<protein>
    <recommendedName>
        <fullName evidence="1">ATP synthase gamma chain</fullName>
    </recommendedName>
    <alternativeName>
        <fullName evidence="1">ATP synthase F1 sector gamma subunit</fullName>
    </alternativeName>
    <alternativeName>
        <fullName evidence="1">F-ATPase gamma subunit</fullName>
    </alternativeName>
</protein>
<gene>
    <name evidence="1" type="primary">atpG</name>
    <name type="ordered locus">RPA0177</name>
</gene>
<name>ATPG_RHOPA</name>
<accession>Q6NDD1</accession>
<dbReference type="EMBL" id="BX572593">
    <property type="protein sequence ID" value="CAE25621.1"/>
    <property type="molecule type" value="Genomic_DNA"/>
</dbReference>
<dbReference type="RefSeq" id="WP_011155745.1">
    <property type="nucleotide sequence ID" value="NZ_CP116810.1"/>
</dbReference>
<dbReference type="SMR" id="Q6NDD1"/>
<dbReference type="STRING" id="258594.RPA0177"/>
<dbReference type="GeneID" id="66891182"/>
<dbReference type="eggNOG" id="COG0224">
    <property type="taxonomic scope" value="Bacteria"/>
</dbReference>
<dbReference type="HOGENOM" id="CLU_050669_0_1_5"/>
<dbReference type="PhylomeDB" id="Q6NDD1"/>
<dbReference type="GO" id="GO:0005886">
    <property type="term" value="C:plasma membrane"/>
    <property type="evidence" value="ECO:0007669"/>
    <property type="project" value="UniProtKB-SubCell"/>
</dbReference>
<dbReference type="GO" id="GO:0045259">
    <property type="term" value="C:proton-transporting ATP synthase complex"/>
    <property type="evidence" value="ECO:0007669"/>
    <property type="project" value="UniProtKB-KW"/>
</dbReference>
<dbReference type="GO" id="GO:0005524">
    <property type="term" value="F:ATP binding"/>
    <property type="evidence" value="ECO:0007669"/>
    <property type="project" value="UniProtKB-UniRule"/>
</dbReference>
<dbReference type="GO" id="GO:0046933">
    <property type="term" value="F:proton-transporting ATP synthase activity, rotational mechanism"/>
    <property type="evidence" value="ECO:0007669"/>
    <property type="project" value="UniProtKB-UniRule"/>
</dbReference>
<dbReference type="GO" id="GO:0042777">
    <property type="term" value="P:proton motive force-driven plasma membrane ATP synthesis"/>
    <property type="evidence" value="ECO:0007669"/>
    <property type="project" value="UniProtKB-UniRule"/>
</dbReference>
<dbReference type="CDD" id="cd12151">
    <property type="entry name" value="F1-ATPase_gamma"/>
    <property type="match status" value="1"/>
</dbReference>
<dbReference type="FunFam" id="1.10.287.80:FF:000001">
    <property type="entry name" value="ATP synthase gamma chain"/>
    <property type="match status" value="1"/>
</dbReference>
<dbReference type="Gene3D" id="3.40.1380.10">
    <property type="match status" value="1"/>
</dbReference>
<dbReference type="Gene3D" id="1.10.287.80">
    <property type="entry name" value="ATP synthase, gamma subunit, helix hairpin domain"/>
    <property type="match status" value="1"/>
</dbReference>
<dbReference type="HAMAP" id="MF_00815">
    <property type="entry name" value="ATP_synth_gamma_bact"/>
    <property type="match status" value="1"/>
</dbReference>
<dbReference type="InterPro" id="IPR035968">
    <property type="entry name" value="ATP_synth_F1_ATPase_gsu"/>
</dbReference>
<dbReference type="InterPro" id="IPR000131">
    <property type="entry name" value="ATP_synth_F1_gsu"/>
</dbReference>
<dbReference type="InterPro" id="IPR023632">
    <property type="entry name" value="ATP_synth_F1_gsu_CS"/>
</dbReference>
<dbReference type="NCBIfam" id="TIGR01146">
    <property type="entry name" value="ATPsyn_F1gamma"/>
    <property type="match status" value="1"/>
</dbReference>
<dbReference type="NCBIfam" id="NF004146">
    <property type="entry name" value="PRK05621.1-4"/>
    <property type="match status" value="1"/>
</dbReference>
<dbReference type="PANTHER" id="PTHR11693">
    <property type="entry name" value="ATP SYNTHASE GAMMA CHAIN"/>
    <property type="match status" value="1"/>
</dbReference>
<dbReference type="PANTHER" id="PTHR11693:SF22">
    <property type="entry name" value="ATP SYNTHASE SUBUNIT GAMMA, MITOCHONDRIAL"/>
    <property type="match status" value="1"/>
</dbReference>
<dbReference type="Pfam" id="PF00231">
    <property type="entry name" value="ATP-synt"/>
    <property type="match status" value="1"/>
</dbReference>
<dbReference type="PIRSF" id="PIRSF039089">
    <property type="entry name" value="ATP_synthase_gamma"/>
    <property type="match status" value="1"/>
</dbReference>
<dbReference type="PRINTS" id="PR00126">
    <property type="entry name" value="ATPASEGAMMA"/>
</dbReference>
<dbReference type="SUPFAM" id="SSF52943">
    <property type="entry name" value="ATP synthase (F1-ATPase), gamma subunit"/>
    <property type="match status" value="1"/>
</dbReference>
<dbReference type="PROSITE" id="PS00153">
    <property type="entry name" value="ATPASE_GAMMA"/>
    <property type="match status" value="1"/>
</dbReference>
<sequence>MASLKDMRVRIASTKATQKITKAMQMVAASKLRRAQMAAEAARPYAEKMEAVISNIAGAAAGSPGAPVLLAGNGKDQVHLLLVCTGERGLSGAFNSSIVRLARERAYELMSQGKTVKFFCVGRKGYEQLRRNFEKQIIDNVELRSVRQIGFVNAEDIAKKVIARFNAGEFDVCTLFYSRFKSVISQIPTAQQLIPLEVTAPAAGTVATSYEYEPEEDEILSGLLPRNLAVQIFRALLENNASFYGAQMSAMDNATRNAGEMIRKQTLVYNRTRQAMITKELIEIISGAEAI</sequence>
<reference key="1">
    <citation type="journal article" date="2004" name="Nat. Biotechnol.">
        <title>Complete genome sequence of the metabolically versatile photosynthetic bacterium Rhodopseudomonas palustris.</title>
        <authorList>
            <person name="Larimer F.W."/>
            <person name="Chain P."/>
            <person name="Hauser L."/>
            <person name="Lamerdin J.E."/>
            <person name="Malfatti S."/>
            <person name="Do L."/>
            <person name="Land M.L."/>
            <person name="Pelletier D.A."/>
            <person name="Beatty J.T."/>
            <person name="Lang A.S."/>
            <person name="Tabita F.R."/>
            <person name="Gibson J.L."/>
            <person name="Hanson T.E."/>
            <person name="Bobst C."/>
            <person name="Torres y Torres J.L."/>
            <person name="Peres C."/>
            <person name="Harrison F.H."/>
            <person name="Gibson J."/>
            <person name="Harwood C.S."/>
        </authorList>
    </citation>
    <scope>NUCLEOTIDE SEQUENCE [LARGE SCALE GENOMIC DNA]</scope>
    <source>
        <strain>ATCC BAA-98 / CGA009</strain>
    </source>
</reference>
<comment type="function">
    <text evidence="1">Produces ATP from ADP in the presence of a proton gradient across the membrane. The gamma chain is believed to be important in regulating ATPase activity and the flow of protons through the CF(0) complex.</text>
</comment>
<comment type="subunit">
    <text evidence="1">F-type ATPases have 2 components, CF(1) - the catalytic core - and CF(0) - the membrane proton channel. CF(1) has five subunits: alpha(3), beta(3), gamma(1), delta(1), epsilon(1). CF(0) has three main subunits: a, b and c.</text>
</comment>
<comment type="subcellular location">
    <subcellularLocation>
        <location evidence="1">Cell inner membrane</location>
        <topology evidence="1">Peripheral membrane protein</topology>
    </subcellularLocation>
</comment>
<comment type="similarity">
    <text evidence="1">Belongs to the ATPase gamma chain family.</text>
</comment>
<feature type="chain" id="PRO_0000073359" description="ATP synthase gamma chain">
    <location>
        <begin position="1"/>
        <end position="291"/>
    </location>
</feature>
<keyword id="KW-0066">ATP synthesis</keyword>
<keyword id="KW-0997">Cell inner membrane</keyword>
<keyword id="KW-1003">Cell membrane</keyword>
<keyword id="KW-0139">CF(1)</keyword>
<keyword id="KW-0375">Hydrogen ion transport</keyword>
<keyword id="KW-0406">Ion transport</keyword>
<keyword id="KW-0472">Membrane</keyword>
<keyword id="KW-0813">Transport</keyword>
<organism>
    <name type="scientific">Rhodopseudomonas palustris (strain ATCC BAA-98 / CGA009)</name>
    <dbReference type="NCBI Taxonomy" id="258594"/>
    <lineage>
        <taxon>Bacteria</taxon>
        <taxon>Pseudomonadati</taxon>
        <taxon>Pseudomonadota</taxon>
        <taxon>Alphaproteobacteria</taxon>
        <taxon>Hyphomicrobiales</taxon>
        <taxon>Nitrobacteraceae</taxon>
        <taxon>Rhodopseudomonas</taxon>
    </lineage>
</organism>
<evidence type="ECO:0000255" key="1">
    <source>
        <dbReference type="HAMAP-Rule" id="MF_00815"/>
    </source>
</evidence>
<proteinExistence type="inferred from homology"/>